<proteinExistence type="evidence at protein level"/>
<protein>
    <recommendedName>
        <fullName>F-box/SPRY domain-containing protein 1</fullName>
    </recommendedName>
    <alternativeName>
        <fullName>F-box synaptic protein 1</fullName>
    </alternativeName>
</protein>
<sequence>MAENDGETIVPDEQCNLTASTPMKSSGLEQVESPKERKTSMVECDDEGNPSSGTPDESPKQLTPHSIPPRRRRSPRRPEVSASRLPLKVLNQIFQYLPLKDLRSAMLTCHSWNNALSMEDSDIWQYLLGKKLPEAAVSDPFLLAELGSAKKKLRAWYFAWNTSDISRNNYIRTNGFTVHRQPVAQSTDGVRGKRGISKGVHAFDITWDGPLGTVAVVGIATKHAALHCVGYVALLGSDDQSWGWNLVDNVLMHNGAQLGVYPKMNNPPKYEVGDKIRLIIDCDTHVAYFERNSEFLGIAFNHIPPLRLYPAVCAVYGNTEVTMVYVGSPQMG</sequence>
<accession>Q18223</accession>
<organism>
    <name type="scientific">Caenorhabditis elegans</name>
    <dbReference type="NCBI Taxonomy" id="6239"/>
    <lineage>
        <taxon>Eukaryota</taxon>
        <taxon>Metazoa</taxon>
        <taxon>Ecdysozoa</taxon>
        <taxon>Nematoda</taxon>
        <taxon>Chromadorea</taxon>
        <taxon>Rhabditida</taxon>
        <taxon>Rhabditina</taxon>
        <taxon>Rhabditomorpha</taxon>
        <taxon>Rhabditoidea</taxon>
        <taxon>Rhabditidae</taxon>
        <taxon>Peloderinae</taxon>
        <taxon>Caenorhabditis</taxon>
    </lineage>
</organism>
<reference key="1">
    <citation type="journal article" date="1998" name="Science">
        <title>Genome sequence of the nematode C. elegans: a platform for investigating biology.</title>
        <authorList>
            <consortium name="The C. elegans sequencing consortium"/>
        </authorList>
    </citation>
    <scope>NUCLEOTIDE SEQUENCE [LARGE SCALE GENOMIC DNA]</scope>
    <source>
        <strain>Bristol N2</strain>
    </source>
</reference>
<reference key="2">
    <citation type="submission" date="2005-09" db="UniProtKB">
        <authorList>
            <person name="Bienvenut W.V."/>
        </authorList>
    </citation>
    <scope>PROTEIN SEQUENCE OF 25-35; 89-100; 131-150; 181-191; 270-275 AND 292-307</scope>
    <scope>IDENTIFICATION BY MASS SPECTROMETRY</scope>
</reference>
<reference evidence="7" key="3">
    <citation type="journal article" date="2004" name="Nature">
        <title>An SCF-like ubiquitin ligase complex that controls presynaptic differentiation.</title>
        <authorList>
            <person name="Liao E.H."/>
            <person name="Hung W."/>
            <person name="Abrams B."/>
            <person name="Zhen M."/>
        </authorList>
    </citation>
    <scope>FUNCTION</scope>
    <scope>INTERACTION WITH CUL-1; RPM-1 AND SKR-1</scope>
    <scope>INTERACTION WITH SCD-2</scope>
    <scope>TISSUE SPECIFICITY</scope>
    <scope>DISRUPTION PHENOTYPE</scope>
</reference>
<reference key="4">
    <citation type="journal article" date="2011" name="Genetics">
        <title>PPM-1, a PP2Calpha/beta phosphatase, regulates axon termination and synapse formation in Caenorhabditis elegans.</title>
        <authorList>
            <person name="Tulgren E.D."/>
            <person name="Baker S.T."/>
            <person name="Rapp L."/>
            <person name="Gurney A.M."/>
            <person name="Grill B."/>
        </authorList>
    </citation>
    <scope>FUNCTION</scope>
</reference>
<reference key="5">
    <citation type="journal article" date="2013" name="EMBO J.">
        <title>Attenuation of insulin signalling contributes to FSN-1-mediated regulation of synapse development.</title>
        <authorList>
            <person name="Hung W.L."/>
            <person name="Hwang C."/>
            <person name="Gao S."/>
            <person name="Liao E.H."/>
            <person name="Chitturi J."/>
            <person name="Wang Y."/>
            <person name="Li H."/>
            <person name="Stigloher C."/>
            <person name="Bessereau J.L."/>
            <person name="Zhen M."/>
        </authorList>
    </citation>
    <scope>FUNCTION</scope>
    <scope>INTERACTION WITH EGL-3</scope>
    <scope>DISRUPTION PHENOTYPE</scope>
    <scope>MUTAGENESIS OF ARG-191</scope>
</reference>
<name>FBSP1_CAEEL</name>
<comment type="function">
    <text evidence="4 5 6">Component of a SCF (SKP1-CUL1-F-box protein) E3 ubiquitin ligase complex which is required for the restriction and/or maturation of synapses in GABAergic neuromuscular junction (NMJ) presynaptic neurons (PubMed:15208641, PubMed:23665919). Promotes NRJ synapse development and synaptic transmission by negatively regulating the daf-2/InsR pathway in muscles (PubMed:23665919). By targeting convertase egl-3 for degradation, negatively modulates insulin-like protein ins-4 and ins-6 processing (PubMed:23665919). May stabilize synapse formation by promoting the down-regulation of scd-2 (PubMed:15208641). Regulates axon termination in PLM and ALM neurons (PubMed:21968191).</text>
</comment>
<comment type="pathway">
    <text>Protein modification; protein ubiquitination.</text>
</comment>
<comment type="subunit">
    <text evidence="4 6">Component of an SCF (SKP1-CUL1-F-box protein) E3 ubiquitin ligase complex composed of cul-1, fsn-1, rpm-1 and skr-1 (PubMed:15208641). Interacts (via SPRY domain) with scd-2 (via cytoplasmic domain) (PubMed:15208641). Interacts (via SPRY domain) with convertase egl-3 (via C-terminus) (PubMed:23665919).</text>
</comment>
<comment type="interaction">
    <interactant intactId="EBI-2003744">
        <id>Q18223</id>
    </interactant>
    <interactant intactId="EBI-323117">
        <id>G5ECU1</id>
        <label>skr-1</label>
    </interactant>
    <organismsDiffer>false</organismsDiffer>
    <experiments>4</experiments>
</comment>
<comment type="subcellular location">
    <subcellularLocation>
        <location>Synapse</location>
    </subcellularLocation>
</comment>
<comment type="tissue specificity">
    <text evidence="4">Expressed in GABAergic neuromuscular junctions (NMJs).</text>
</comment>
<comment type="disruption phenotype">
    <text evidence="4 6">Synaptic defects that include both overdevelopment and underdevelopment of presynaptic and postsynaptic termini (PubMed:15208641). Abnormal morphology of cholinergic and GABAergic neuromuscular junctions (NMJs) characterized by uneven distribution of presynaptic markers snb-1 and unc-17 and post-synaptic markers GABA receptor unc-49 and AChR unc-38. Also, formation of abnormally large and small synapses (PubMed:23665919). Frequency of spontaneous miniature synaptic release (mPSC) from cholinergic and GABAergic NMJs is reduced (PubMed:23665919). In a daf-2 e1370 mutant background, but not in a daf-2 e1370 and daf-16 mu86 mutant background, the morphology of NMJs is normal and normal synaptic transmission is partially restored (PubMed:23665919). Nuclear translocation of daf-16 (isoform a) is impaired in muscles but not in the intestine (PubMed:23665919).</text>
</comment>
<comment type="similarity">
    <text evidence="7">Belongs to the FBXO45/Fsn family.</text>
</comment>
<gene>
    <name type="primary">fsn-1</name>
    <name type="ORF">C26E6.5</name>
</gene>
<keyword id="KW-0903">Direct protein sequencing</keyword>
<keyword id="KW-1185">Reference proteome</keyword>
<keyword id="KW-0770">Synapse</keyword>
<keyword id="KW-0833">Ubl conjugation pathway</keyword>
<feature type="chain" id="PRO_0000119948" description="F-box/SPRY domain-containing protein 1">
    <location>
        <begin position="1"/>
        <end position="332"/>
    </location>
</feature>
<feature type="domain" description="F-box" evidence="1">
    <location>
        <begin position="79"/>
        <end position="127"/>
    </location>
</feature>
<feature type="domain" description="B30.2/SPRY" evidence="2">
    <location>
        <begin position="138"/>
        <end position="330"/>
    </location>
</feature>
<feature type="region of interest" description="Disordered" evidence="3">
    <location>
        <begin position="1"/>
        <end position="82"/>
    </location>
</feature>
<feature type="compositionally biased region" description="Polar residues" evidence="3">
    <location>
        <begin position="15"/>
        <end position="28"/>
    </location>
</feature>
<feature type="compositionally biased region" description="Polar residues" evidence="3">
    <location>
        <begin position="49"/>
        <end position="64"/>
    </location>
</feature>
<feature type="mutagenesis site" description="In hp2; abnormal morphology of GABAergic neuromuscular junctions and reduced synaptic transmission. Severe impaired interaction with egl-3 and loss of egl-3 ubiquitination." evidence="6">
    <original>R</original>
    <variation>C</variation>
    <location>
        <position position="191"/>
    </location>
</feature>
<evidence type="ECO:0000255" key="1">
    <source>
        <dbReference type="PROSITE-ProRule" id="PRU00080"/>
    </source>
</evidence>
<evidence type="ECO:0000255" key="2">
    <source>
        <dbReference type="PROSITE-ProRule" id="PRU00548"/>
    </source>
</evidence>
<evidence type="ECO:0000256" key="3">
    <source>
        <dbReference type="SAM" id="MobiDB-lite"/>
    </source>
</evidence>
<evidence type="ECO:0000269" key="4">
    <source>
    </source>
</evidence>
<evidence type="ECO:0000269" key="5">
    <source>
    </source>
</evidence>
<evidence type="ECO:0000269" key="6">
    <source>
    </source>
</evidence>
<evidence type="ECO:0000305" key="7"/>
<dbReference type="EMBL" id="FO080680">
    <property type="protein sequence ID" value="CCD65729.1"/>
    <property type="molecule type" value="Genomic_DNA"/>
</dbReference>
<dbReference type="PIR" id="D88445">
    <property type="entry name" value="D88445"/>
</dbReference>
<dbReference type="RefSeq" id="NP_498046.1">
    <property type="nucleotide sequence ID" value="NM_065645.8"/>
</dbReference>
<dbReference type="SMR" id="Q18223"/>
<dbReference type="BioGRID" id="40900">
    <property type="interactions" value="6"/>
</dbReference>
<dbReference type="ComplexPortal" id="CPX-958">
    <property type="entry name" value="SCF-rpm-1 ubiquitin ligase complex"/>
</dbReference>
<dbReference type="FunCoup" id="Q18223">
    <property type="interactions" value="2134"/>
</dbReference>
<dbReference type="IntAct" id="Q18223">
    <property type="interactions" value="4"/>
</dbReference>
<dbReference type="STRING" id="6239.C26E6.5.1"/>
<dbReference type="PaxDb" id="6239-C26E6.5"/>
<dbReference type="PeptideAtlas" id="Q18223"/>
<dbReference type="EnsemblMetazoa" id="C26E6.5.1">
    <property type="protein sequence ID" value="C26E6.5.1"/>
    <property type="gene ID" value="WBGene00001499"/>
</dbReference>
<dbReference type="GeneID" id="175667"/>
<dbReference type="KEGG" id="cel:CELE_C26E6.5"/>
<dbReference type="UCSC" id="C26E6.5">
    <property type="organism name" value="c. elegans"/>
</dbReference>
<dbReference type="AGR" id="WB:WBGene00001499"/>
<dbReference type="CTD" id="175667"/>
<dbReference type="WormBase" id="C26E6.5">
    <property type="protein sequence ID" value="CE01163"/>
    <property type="gene ID" value="WBGene00001499"/>
    <property type="gene designation" value="fsn-1"/>
</dbReference>
<dbReference type="eggNOG" id="KOG3953">
    <property type="taxonomic scope" value="Eukaryota"/>
</dbReference>
<dbReference type="GeneTree" id="ENSGT01030000234629"/>
<dbReference type="HOGENOM" id="CLU_046756_1_0_1"/>
<dbReference type="InParanoid" id="Q18223"/>
<dbReference type="OMA" id="ATKRASM"/>
<dbReference type="OrthoDB" id="2398163at2759"/>
<dbReference type="PhylomeDB" id="Q18223"/>
<dbReference type="UniPathway" id="UPA00143"/>
<dbReference type="PRO" id="PR:Q18223"/>
<dbReference type="Proteomes" id="UP000001940">
    <property type="component" value="Chromosome III"/>
</dbReference>
<dbReference type="Bgee" id="WBGene00001499">
    <property type="expression patterns" value="Expressed in germ line (C elegans) and 4 other cell types or tissues"/>
</dbReference>
<dbReference type="GO" id="GO:0031594">
    <property type="term" value="C:neuromuscular junction"/>
    <property type="evidence" value="ECO:0000314"/>
    <property type="project" value="SynGO"/>
</dbReference>
<dbReference type="GO" id="GO:0043005">
    <property type="term" value="C:neuron projection"/>
    <property type="evidence" value="ECO:0000314"/>
    <property type="project" value="WormBase"/>
</dbReference>
<dbReference type="GO" id="GO:0098793">
    <property type="term" value="C:presynapse"/>
    <property type="evidence" value="ECO:0000314"/>
    <property type="project" value="SynGO"/>
</dbReference>
<dbReference type="GO" id="GO:0019005">
    <property type="term" value="C:SCF ubiquitin ligase complex"/>
    <property type="evidence" value="ECO:0000314"/>
    <property type="project" value="ComplexPortal"/>
</dbReference>
<dbReference type="GO" id="GO:0045202">
    <property type="term" value="C:synapse"/>
    <property type="evidence" value="ECO:0000318"/>
    <property type="project" value="GO_Central"/>
</dbReference>
<dbReference type="GO" id="GO:0002020">
    <property type="term" value="F:protease binding"/>
    <property type="evidence" value="ECO:0000353"/>
    <property type="project" value="UniProtKB"/>
</dbReference>
<dbReference type="GO" id="GO:0040024">
    <property type="term" value="P:dauer larval development"/>
    <property type="evidence" value="ECO:0000316"/>
    <property type="project" value="UniProtKB"/>
</dbReference>
<dbReference type="GO" id="GO:0008340">
    <property type="term" value="P:determination of adult lifespan"/>
    <property type="evidence" value="ECO:0000315"/>
    <property type="project" value="UniProtKB"/>
</dbReference>
<dbReference type="GO" id="GO:0043066">
    <property type="term" value="P:negative regulation of apoptotic process"/>
    <property type="evidence" value="ECO:0000315"/>
    <property type="project" value="UniProtKB"/>
</dbReference>
<dbReference type="GO" id="GO:0030517">
    <property type="term" value="P:negative regulation of axon extension"/>
    <property type="evidence" value="ECO:0000316"/>
    <property type="project" value="WormBase"/>
</dbReference>
<dbReference type="GO" id="GO:0048681">
    <property type="term" value="P:negative regulation of axon regeneration"/>
    <property type="evidence" value="ECO:0000315"/>
    <property type="project" value="WormBase"/>
</dbReference>
<dbReference type="GO" id="GO:0043518">
    <property type="term" value="P:negative regulation of DNA damage response, signal transduction by p53 class mediator"/>
    <property type="evidence" value="ECO:0000315"/>
    <property type="project" value="UniProtKB"/>
</dbReference>
<dbReference type="GO" id="GO:0010629">
    <property type="term" value="P:negative regulation of gene expression"/>
    <property type="evidence" value="ECO:0000315"/>
    <property type="project" value="UniProtKB"/>
</dbReference>
<dbReference type="GO" id="GO:1900075">
    <property type="term" value="P:positive regulation of neuromuscular synaptic transmission"/>
    <property type="evidence" value="ECO:0000315"/>
    <property type="project" value="UniProtKB"/>
</dbReference>
<dbReference type="GO" id="GO:1900182">
    <property type="term" value="P:positive regulation of protein localization to nucleus"/>
    <property type="evidence" value="ECO:0000315"/>
    <property type="project" value="UniProtKB"/>
</dbReference>
<dbReference type="GO" id="GO:0051965">
    <property type="term" value="P:positive regulation of synapse assembly"/>
    <property type="evidence" value="ECO:0000315"/>
    <property type="project" value="WormBase"/>
</dbReference>
<dbReference type="GO" id="GO:0045887">
    <property type="term" value="P:positive regulation of synaptic assembly at neuromuscular junction"/>
    <property type="evidence" value="ECO:0000315"/>
    <property type="project" value="UniProtKB"/>
</dbReference>
<dbReference type="GO" id="GO:0043161">
    <property type="term" value="P:proteasome-mediated ubiquitin-dependent protein catabolic process"/>
    <property type="evidence" value="ECO:0000318"/>
    <property type="project" value="GO_Central"/>
</dbReference>
<dbReference type="GO" id="GO:0016567">
    <property type="term" value="P:protein ubiquitination"/>
    <property type="evidence" value="ECO:0007669"/>
    <property type="project" value="UniProtKB-UniPathway"/>
</dbReference>
<dbReference type="GO" id="GO:1900073">
    <property type="term" value="P:regulation of neuromuscular synaptic transmission"/>
    <property type="evidence" value="ECO:0000316"/>
    <property type="project" value="UniProtKB"/>
</dbReference>
<dbReference type="GO" id="GO:0090128">
    <property type="term" value="P:regulation of synapse maturation"/>
    <property type="evidence" value="ECO:0000303"/>
    <property type="project" value="ComplexPortal"/>
</dbReference>
<dbReference type="GO" id="GO:0008582">
    <property type="term" value="P:regulation of synaptic assembly at neuromuscular junction"/>
    <property type="evidence" value="ECO:0000316"/>
    <property type="project" value="UniProtKB"/>
</dbReference>
<dbReference type="GO" id="GO:0010212">
    <property type="term" value="P:response to ionizing radiation"/>
    <property type="evidence" value="ECO:0000315"/>
    <property type="project" value="UniProtKB"/>
</dbReference>
<dbReference type="GO" id="GO:0060386">
    <property type="term" value="P:synapse assembly involved in innervation"/>
    <property type="evidence" value="ECO:0000318"/>
    <property type="project" value="GO_Central"/>
</dbReference>
<dbReference type="GO" id="GO:0006511">
    <property type="term" value="P:ubiquitin-dependent protein catabolic process"/>
    <property type="evidence" value="ECO:0000314"/>
    <property type="project" value="UniProtKB"/>
</dbReference>
<dbReference type="CDD" id="cd22104">
    <property type="entry name" value="F-box_FBXO33"/>
    <property type="match status" value="1"/>
</dbReference>
<dbReference type="CDD" id="cd12907">
    <property type="entry name" value="SPRY_Fbox"/>
    <property type="match status" value="1"/>
</dbReference>
<dbReference type="FunFam" id="1.20.1280.50:FF:000055">
    <property type="entry name" value="F-box/SPRY domain-containing protein 1"/>
    <property type="match status" value="1"/>
</dbReference>
<dbReference type="FunFam" id="2.60.120.920:FF:000017">
    <property type="entry name" value="F-box/SPRY domain-containing protein 1"/>
    <property type="match status" value="1"/>
</dbReference>
<dbReference type="Gene3D" id="1.20.1280.50">
    <property type="match status" value="1"/>
</dbReference>
<dbReference type="Gene3D" id="2.60.120.920">
    <property type="match status" value="1"/>
</dbReference>
<dbReference type="InterPro" id="IPR001870">
    <property type="entry name" value="B30.2/SPRY"/>
</dbReference>
<dbReference type="InterPro" id="IPR043136">
    <property type="entry name" value="B30.2/SPRY_sf"/>
</dbReference>
<dbReference type="InterPro" id="IPR013320">
    <property type="entry name" value="ConA-like_dom_sf"/>
</dbReference>
<dbReference type="InterPro" id="IPR036047">
    <property type="entry name" value="F-box-like_dom_sf"/>
</dbReference>
<dbReference type="InterPro" id="IPR001810">
    <property type="entry name" value="F-box_dom"/>
</dbReference>
<dbReference type="InterPro" id="IPR050672">
    <property type="entry name" value="FBXO45-Fsn/SPSB_families"/>
</dbReference>
<dbReference type="InterPro" id="IPR003877">
    <property type="entry name" value="SPRY_dom"/>
</dbReference>
<dbReference type="InterPro" id="IPR035784">
    <property type="entry name" value="SPRY_FBXO45"/>
</dbReference>
<dbReference type="PANTHER" id="PTHR12245:SF7">
    <property type="entry name" value="F-BOX_SPRY DOMAIN-CONTAINING PROTEIN 1"/>
    <property type="match status" value="1"/>
</dbReference>
<dbReference type="PANTHER" id="PTHR12245">
    <property type="entry name" value="SPRY DOMAIN CONTAINING SOCS BOX PROTEIN"/>
    <property type="match status" value="1"/>
</dbReference>
<dbReference type="Pfam" id="PF00646">
    <property type="entry name" value="F-box"/>
    <property type="match status" value="1"/>
</dbReference>
<dbReference type="Pfam" id="PF00622">
    <property type="entry name" value="SPRY"/>
    <property type="match status" value="1"/>
</dbReference>
<dbReference type="SMART" id="SM00256">
    <property type="entry name" value="FBOX"/>
    <property type="match status" value="1"/>
</dbReference>
<dbReference type="SMART" id="SM00449">
    <property type="entry name" value="SPRY"/>
    <property type="match status" value="1"/>
</dbReference>
<dbReference type="SUPFAM" id="SSF49899">
    <property type="entry name" value="Concanavalin A-like lectins/glucanases"/>
    <property type="match status" value="1"/>
</dbReference>
<dbReference type="SUPFAM" id="SSF81383">
    <property type="entry name" value="F-box domain"/>
    <property type="match status" value="1"/>
</dbReference>
<dbReference type="PROSITE" id="PS50188">
    <property type="entry name" value="B302_SPRY"/>
    <property type="match status" value="1"/>
</dbReference>
<dbReference type="PROSITE" id="PS50181">
    <property type="entry name" value="FBOX"/>
    <property type="match status" value="1"/>
</dbReference>